<name>F16PA_STUS1</name>
<dbReference type="EC" id="3.1.3.11" evidence="1"/>
<dbReference type="EMBL" id="CP000304">
    <property type="protein sequence ID" value="ABP78030.1"/>
    <property type="molecule type" value="Genomic_DNA"/>
</dbReference>
<dbReference type="RefSeq" id="WP_011911562.1">
    <property type="nucleotide sequence ID" value="NC_009434.1"/>
</dbReference>
<dbReference type="SMR" id="A4VGC9"/>
<dbReference type="KEGG" id="psa:PST_0324"/>
<dbReference type="eggNOG" id="COG0158">
    <property type="taxonomic scope" value="Bacteria"/>
</dbReference>
<dbReference type="HOGENOM" id="CLU_039977_0_0_6"/>
<dbReference type="UniPathway" id="UPA00138"/>
<dbReference type="Proteomes" id="UP000000233">
    <property type="component" value="Chromosome"/>
</dbReference>
<dbReference type="GO" id="GO:0005829">
    <property type="term" value="C:cytosol"/>
    <property type="evidence" value="ECO:0007669"/>
    <property type="project" value="TreeGrafter"/>
</dbReference>
<dbReference type="GO" id="GO:0042132">
    <property type="term" value="F:fructose 1,6-bisphosphate 1-phosphatase activity"/>
    <property type="evidence" value="ECO:0007669"/>
    <property type="project" value="UniProtKB-UniRule"/>
</dbReference>
<dbReference type="GO" id="GO:0000287">
    <property type="term" value="F:magnesium ion binding"/>
    <property type="evidence" value="ECO:0007669"/>
    <property type="project" value="UniProtKB-UniRule"/>
</dbReference>
<dbReference type="GO" id="GO:0030388">
    <property type="term" value="P:fructose 1,6-bisphosphate metabolic process"/>
    <property type="evidence" value="ECO:0007669"/>
    <property type="project" value="TreeGrafter"/>
</dbReference>
<dbReference type="GO" id="GO:0006002">
    <property type="term" value="P:fructose 6-phosphate metabolic process"/>
    <property type="evidence" value="ECO:0007669"/>
    <property type="project" value="TreeGrafter"/>
</dbReference>
<dbReference type="GO" id="GO:0006000">
    <property type="term" value="P:fructose metabolic process"/>
    <property type="evidence" value="ECO:0007669"/>
    <property type="project" value="TreeGrafter"/>
</dbReference>
<dbReference type="GO" id="GO:0006094">
    <property type="term" value="P:gluconeogenesis"/>
    <property type="evidence" value="ECO:0007669"/>
    <property type="project" value="UniProtKB-UniRule"/>
</dbReference>
<dbReference type="GO" id="GO:0005986">
    <property type="term" value="P:sucrose biosynthetic process"/>
    <property type="evidence" value="ECO:0007669"/>
    <property type="project" value="TreeGrafter"/>
</dbReference>
<dbReference type="CDD" id="cd00354">
    <property type="entry name" value="FBPase"/>
    <property type="match status" value="1"/>
</dbReference>
<dbReference type="FunFam" id="3.30.540.10:FF:000006">
    <property type="entry name" value="Fructose-1,6-bisphosphatase class 1"/>
    <property type="match status" value="1"/>
</dbReference>
<dbReference type="FunFam" id="3.40.190.80:FF:000011">
    <property type="entry name" value="Fructose-1,6-bisphosphatase class 1"/>
    <property type="match status" value="1"/>
</dbReference>
<dbReference type="Gene3D" id="3.40.190.80">
    <property type="match status" value="1"/>
</dbReference>
<dbReference type="Gene3D" id="3.30.540.10">
    <property type="entry name" value="Fructose-1,6-Bisphosphatase, subunit A, domain 1"/>
    <property type="match status" value="1"/>
</dbReference>
<dbReference type="HAMAP" id="MF_01855">
    <property type="entry name" value="FBPase_class1"/>
    <property type="match status" value="1"/>
</dbReference>
<dbReference type="InterPro" id="IPR044015">
    <property type="entry name" value="FBPase_C_dom"/>
</dbReference>
<dbReference type="InterPro" id="IPR000146">
    <property type="entry name" value="FBPase_class-1"/>
</dbReference>
<dbReference type="InterPro" id="IPR033391">
    <property type="entry name" value="FBPase_N"/>
</dbReference>
<dbReference type="InterPro" id="IPR028343">
    <property type="entry name" value="FBPtase"/>
</dbReference>
<dbReference type="NCBIfam" id="NF006778">
    <property type="entry name" value="PRK09293.1-1"/>
    <property type="match status" value="1"/>
</dbReference>
<dbReference type="NCBIfam" id="NF006779">
    <property type="entry name" value="PRK09293.1-3"/>
    <property type="match status" value="1"/>
</dbReference>
<dbReference type="NCBIfam" id="NF006780">
    <property type="entry name" value="PRK09293.1-4"/>
    <property type="match status" value="1"/>
</dbReference>
<dbReference type="PANTHER" id="PTHR11556">
    <property type="entry name" value="FRUCTOSE-1,6-BISPHOSPHATASE-RELATED"/>
    <property type="match status" value="1"/>
</dbReference>
<dbReference type="PANTHER" id="PTHR11556:SF35">
    <property type="entry name" value="SEDOHEPTULOSE-1,7-BISPHOSPHATASE, CHLOROPLASTIC"/>
    <property type="match status" value="1"/>
</dbReference>
<dbReference type="Pfam" id="PF00316">
    <property type="entry name" value="FBPase"/>
    <property type="match status" value="1"/>
</dbReference>
<dbReference type="Pfam" id="PF18913">
    <property type="entry name" value="FBPase_C"/>
    <property type="match status" value="1"/>
</dbReference>
<dbReference type="PIRSF" id="PIRSF500210">
    <property type="entry name" value="FBPtase"/>
    <property type="match status" value="1"/>
</dbReference>
<dbReference type="PIRSF" id="PIRSF000904">
    <property type="entry name" value="FBPtase_SBPase"/>
    <property type="match status" value="1"/>
</dbReference>
<dbReference type="PRINTS" id="PR00115">
    <property type="entry name" value="F16BPHPHTASE"/>
</dbReference>
<dbReference type="SUPFAM" id="SSF56655">
    <property type="entry name" value="Carbohydrate phosphatase"/>
    <property type="match status" value="1"/>
</dbReference>
<sequence length="336" mass="36700">MSRVTLSRYLIEQTRSNNTPADLRFLIEVVARACKAISHQVSKGALGGVLGSAGSENVQGEVQKKLDVLSNEILLEANEWGGHLAGMASEEMDNAYQIPGKYPKGAYLLVFDPLDGSSNIDVNVSVGTIFSVLRCPDACFSQNDALGEEAFLQPGTKQVAAGYAIYGPQTMLVLTLGHGVMGFTLDRELGSFVLTHENLCVPQSTAEFAINMSNQRHWEAPVQRYVGELLAGKEGPLGKNYNMRWIASMVADVHRILTRGGIFMYPRDAREPDKAGKLRLMYEANPMSMIIEQAGGAATTGTQRILEIQPQSLHQRVPVFLGSKEEVERVTGYHQG</sequence>
<proteinExistence type="inferred from homology"/>
<organism>
    <name type="scientific">Stutzerimonas stutzeri (strain A1501)</name>
    <name type="common">Pseudomonas stutzeri</name>
    <dbReference type="NCBI Taxonomy" id="379731"/>
    <lineage>
        <taxon>Bacteria</taxon>
        <taxon>Pseudomonadati</taxon>
        <taxon>Pseudomonadota</taxon>
        <taxon>Gammaproteobacteria</taxon>
        <taxon>Pseudomonadales</taxon>
        <taxon>Pseudomonadaceae</taxon>
        <taxon>Stutzerimonas</taxon>
    </lineage>
</organism>
<feature type="chain" id="PRO_0000364652" description="Fructose-1,6-bisphosphatase class 1">
    <location>
        <begin position="1"/>
        <end position="336"/>
    </location>
</feature>
<feature type="binding site" evidence="1">
    <location>
        <position position="90"/>
    </location>
    <ligand>
        <name>Mg(2+)</name>
        <dbReference type="ChEBI" id="CHEBI:18420"/>
        <label>1</label>
    </ligand>
</feature>
<feature type="binding site" evidence="1">
    <location>
        <position position="112"/>
    </location>
    <ligand>
        <name>Mg(2+)</name>
        <dbReference type="ChEBI" id="CHEBI:18420"/>
        <label>1</label>
    </ligand>
</feature>
<feature type="binding site" evidence="1">
    <location>
        <position position="112"/>
    </location>
    <ligand>
        <name>Mg(2+)</name>
        <dbReference type="ChEBI" id="CHEBI:18420"/>
        <label>2</label>
    </ligand>
</feature>
<feature type="binding site" evidence="1">
    <location>
        <position position="114"/>
    </location>
    <ligand>
        <name>Mg(2+)</name>
        <dbReference type="ChEBI" id="CHEBI:18420"/>
        <label>1</label>
    </ligand>
</feature>
<feature type="binding site" evidence="1">
    <location>
        <begin position="115"/>
        <end position="118"/>
    </location>
    <ligand>
        <name>substrate</name>
    </ligand>
</feature>
<feature type="binding site" evidence="1">
    <location>
        <position position="115"/>
    </location>
    <ligand>
        <name>Mg(2+)</name>
        <dbReference type="ChEBI" id="CHEBI:18420"/>
        <label>2</label>
    </ligand>
</feature>
<feature type="binding site" evidence="1">
    <location>
        <position position="211"/>
    </location>
    <ligand>
        <name>substrate</name>
    </ligand>
</feature>
<feature type="binding site" evidence="1">
    <location>
        <position position="277"/>
    </location>
    <ligand>
        <name>substrate</name>
    </ligand>
</feature>
<feature type="binding site" evidence="1">
    <location>
        <position position="283"/>
    </location>
    <ligand>
        <name>Mg(2+)</name>
        <dbReference type="ChEBI" id="CHEBI:18420"/>
        <label>2</label>
    </ligand>
</feature>
<keyword id="KW-0119">Carbohydrate metabolism</keyword>
<keyword id="KW-0963">Cytoplasm</keyword>
<keyword id="KW-0378">Hydrolase</keyword>
<keyword id="KW-0460">Magnesium</keyword>
<keyword id="KW-0479">Metal-binding</keyword>
<keyword id="KW-1185">Reference proteome</keyword>
<accession>A4VGC9</accession>
<gene>
    <name evidence="1" type="primary">fbp</name>
    <name type="ordered locus">PST_0324</name>
</gene>
<evidence type="ECO:0000255" key="1">
    <source>
        <dbReference type="HAMAP-Rule" id="MF_01855"/>
    </source>
</evidence>
<comment type="catalytic activity">
    <reaction evidence="1">
        <text>beta-D-fructose 1,6-bisphosphate + H2O = beta-D-fructose 6-phosphate + phosphate</text>
        <dbReference type="Rhea" id="RHEA:11064"/>
        <dbReference type="ChEBI" id="CHEBI:15377"/>
        <dbReference type="ChEBI" id="CHEBI:32966"/>
        <dbReference type="ChEBI" id="CHEBI:43474"/>
        <dbReference type="ChEBI" id="CHEBI:57634"/>
        <dbReference type="EC" id="3.1.3.11"/>
    </reaction>
</comment>
<comment type="cofactor">
    <cofactor evidence="1">
        <name>Mg(2+)</name>
        <dbReference type="ChEBI" id="CHEBI:18420"/>
    </cofactor>
    <text evidence="1">Binds 2 magnesium ions per subunit.</text>
</comment>
<comment type="pathway">
    <text evidence="1">Carbohydrate biosynthesis; gluconeogenesis.</text>
</comment>
<comment type="subunit">
    <text evidence="1">Homotetramer.</text>
</comment>
<comment type="subcellular location">
    <subcellularLocation>
        <location evidence="1">Cytoplasm</location>
    </subcellularLocation>
</comment>
<comment type="similarity">
    <text evidence="1">Belongs to the FBPase class 1 family.</text>
</comment>
<reference key="1">
    <citation type="journal article" date="2008" name="Proc. Natl. Acad. Sci. U.S.A.">
        <title>Nitrogen fixation island and rhizosphere competence traits in the genome of root-associated Pseudomonas stutzeri A1501.</title>
        <authorList>
            <person name="Yan Y."/>
            <person name="Yang J."/>
            <person name="Dou Y."/>
            <person name="Chen M."/>
            <person name="Ping S."/>
            <person name="Peng J."/>
            <person name="Lu W."/>
            <person name="Zhang W."/>
            <person name="Yao Z."/>
            <person name="Li H."/>
            <person name="Liu W."/>
            <person name="He S."/>
            <person name="Geng L."/>
            <person name="Zhang X."/>
            <person name="Yang F."/>
            <person name="Yu H."/>
            <person name="Zhan Y."/>
            <person name="Li D."/>
            <person name="Lin Z."/>
            <person name="Wang Y."/>
            <person name="Elmerich C."/>
            <person name="Lin M."/>
            <person name="Jin Q."/>
        </authorList>
    </citation>
    <scope>NUCLEOTIDE SEQUENCE [LARGE SCALE GENOMIC DNA]</scope>
    <source>
        <strain>A1501</strain>
    </source>
</reference>
<protein>
    <recommendedName>
        <fullName evidence="1">Fructose-1,6-bisphosphatase class 1</fullName>
        <shortName evidence="1">FBPase class 1</shortName>
        <ecNumber evidence="1">3.1.3.11</ecNumber>
    </recommendedName>
    <alternativeName>
        <fullName evidence="1">D-fructose-1,6-bisphosphate 1-phosphohydrolase class 1</fullName>
    </alternativeName>
</protein>